<reference key="1">
    <citation type="journal article" date="1999" name="Hum. Mol. Genet.">
        <title>PQBP-1, a novel polyglutamine tract binding protein, inhibits transcription activation by Brn-2 and affects cell survival.</title>
        <authorList>
            <person name="Waragai M."/>
            <person name="Lammers C.-H."/>
            <person name="Takeuchi S."/>
            <person name="Imafuku I."/>
            <person name="Udagawa Y."/>
            <person name="Kanazawa I."/>
            <person name="Kawabata M."/>
            <person name="Mouradian M.M."/>
            <person name="Okazawa H."/>
        </authorList>
    </citation>
    <scope>NUCLEOTIDE SEQUENCE [MRNA] (ISOFORM 1)</scope>
    <scope>FUNCTION</scope>
    <scope>INTERACTION WITH POU3F2; HTT AND AR</scope>
    <scope>SUBCELLULAR LOCATION</scope>
    <scope>TISSUE SPECIFICITY</scope>
    <source>
        <tissue>Brain</tissue>
    </source>
</reference>
<reference key="2">
    <citation type="journal article" date="1999" name="Nucleic Acids Res.">
        <title>Npw38, a novel nuclear protein possessing a WW domain capable of activating basal transcription.</title>
        <authorList>
            <person name="Komuro A."/>
            <person name="Saeki M."/>
            <person name="Kato S."/>
        </authorList>
    </citation>
    <scope>NUCLEOTIDE SEQUENCE [MRNA] (ISOFORM 1)</scope>
    <scope>FUNCTION</scope>
    <scope>SUBCELLULAR LOCATION</scope>
    <scope>TISSUE SPECIFICITY</scope>
    <scope>MUTAGENESIS OF TRP-52; TYR-64; TYR-65; TRP-66; TRP-75 AND PRO-78</scope>
    <source>
        <tissue>Gastric adenocarcinoma</tissue>
    </source>
</reference>
<reference key="3">
    <citation type="journal article" date="2000" name="Gene">
        <title>Genomic organization and alternative transcripts of the human PQBP-1 gene.</title>
        <authorList>
            <person name="Iwamoto K."/>
            <person name="Huang Y.-T."/>
            <person name="Ueda S."/>
        </authorList>
    </citation>
    <scope>NUCLEOTIDE SEQUENCE [GENOMIC DNA / MRNA] (ISOFORMS 1; 3; 4 AND 7)</scope>
</reference>
<reference key="4">
    <citation type="submission" date="2005-06" db="EMBL/GenBank/DDBJ databases">
        <title>Detailed sampling of cloned cDNA samples identifies additional PQBP1 transcript variants.</title>
        <authorList>
            <person name="Eades T.L."/>
            <person name="Huckle E.L."/>
            <person name="Ross M.T."/>
        </authorList>
    </citation>
    <scope>NUCLEOTIDE SEQUENCE [MRNA] (ISOFORMS 1; 2; 3; 4; 5; 6; 8; 9 AND 10)</scope>
    <source>
        <tissue>Adrenal gland</tissue>
        <tissue>Kidney</tissue>
        <tissue>Small intestine</tissue>
        <tissue>Thymus</tissue>
    </source>
</reference>
<reference key="5">
    <citation type="submission" date="1998-04" db="EMBL/GenBank/DDBJ databases">
        <title>Transcription map in Xp11.23.</title>
        <authorList>
            <person name="Strom T.M."/>
            <person name="Nyakatura G."/>
            <person name="Hellebrand H."/>
            <person name="Drescher B."/>
            <person name="Rosenthal A."/>
            <person name="Meindl A."/>
        </authorList>
    </citation>
    <scope>NUCLEOTIDE SEQUENCE [LARGE SCALE MRNA] (ISOFORM 1)</scope>
</reference>
<reference key="6">
    <citation type="journal article" date="2005" name="Nature">
        <title>The DNA sequence of the human X chromosome.</title>
        <authorList>
            <person name="Ross M.T."/>
            <person name="Grafham D.V."/>
            <person name="Coffey A.J."/>
            <person name="Scherer S."/>
            <person name="McLay K."/>
            <person name="Muzny D."/>
            <person name="Platzer M."/>
            <person name="Howell G.R."/>
            <person name="Burrows C."/>
            <person name="Bird C.P."/>
            <person name="Frankish A."/>
            <person name="Lovell F.L."/>
            <person name="Howe K.L."/>
            <person name="Ashurst J.L."/>
            <person name="Fulton R.S."/>
            <person name="Sudbrak R."/>
            <person name="Wen G."/>
            <person name="Jones M.C."/>
            <person name="Hurles M.E."/>
            <person name="Andrews T.D."/>
            <person name="Scott C.E."/>
            <person name="Searle S."/>
            <person name="Ramser J."/>
            <person name="Whittaker A."/>
            <person name="Deadman R."/>
            <person name="Carter N.P."/>
            <person name="Hunt S.E."/>
            <person name="Chen R."/>
            <person name="Cree A."/>
            <person name="Gunaratne P."/>
            <person name="Havlak P."/>
            <person name="Hodgson A."/>
            <person name="Metzker M.L."/>
            <person name="Richards S."/>
            <person name="Scott G."/>
            <person name="Steffen D."/>
            <person name="Sodergren E."/>
            <person name="Wheeler D.A."/>
            <person name="Worley K.C."/>
            <person name="Ainscough R."/>
            <person name="Ambrose K.D."/>
            <person name="Ansari-Lari M.A."/>
            <person name="Aradhya S."/>
            <person name="Ashwell R.I."/>
            <person name="Babbage A.K."/>
            <person name="Bagguley C.L."/>
            <person name="Ballabio A."/>
            <person name="Banerjee R."/>
            <person name="Barker G.E."/>
            <person name="Barlow K.F."/>
            <person name="Barrett I.P."/>
            <person name="Bates K.N."/>
            <person name="Beare D.M."/>
            <person name="Beasley H."/>
            <person name="Beasley O."/>
            <person name="Beck A."/>
            <person name="Bethel G."/>
            <person name="Blechschmidt K."/>
            <person name="Brady N."/>
            <person name="Bray-Allen S."/>
            <person name="Bridgeman A.M."/>
            <person name="Brown A.J."/>
            <person name="Brown M.J."/>
            <person name="Bonnin D."/>
            <person name="Bruford E.A."/>
            <person name="Buhay C."/>
            <person name="Burch P."/>
            <person name="Burford D."/>
            <person name="Burgess J."/>
            <person name="Burrill W."/>
            <person name="Burton J."/>
            <person name="Bye J.M."/>
            <person name="Carder C."/>
            <person name="Carrel L."/>
            <person name="Chako J."/>
            <person name="Chapman J.C."/>
            <person name="Chavez D."/>
            <person name="Chen E."/>
            <person name="Chen G."/>
            <person name="Chen Y."/>
            <person name="Chen Z."/>
            <person name="Chinault C."/>
            <person name="Ciccodicola A."/>
            <person name="Clark S.Y."/>
            <person name="Clarke G."/>
            <person name="Clee C.M."/>
            <person name="Clegg S."/>
            <person name="Clerc-Blankenburg K."/>
            <person name="Clifford K."/>
            <person name="Cobley V."/>
            <person name="Cole C.G."/>
            <person name="Conquer J.S."/>
            <person name="Corby N."/>
            <person name="Connor R.E."/>
            <person name="David R."/>
            <person name="Davies J."/>
            <person name="Davis C."/>
            <person name="Davis J."/>
            <person name="Delgado O."/>
            <person name="Deshazo D."/>
            <person name="Dhami P."/>
            <person name="Ding Y."/>
            <person name="Dinh H."/>
            <person name="Dodsworth S."/>
            <person name="Draper H."/>
            <person name="Dugan-Rocha S."/>
            <person name="Dunham A."/>
            <person name="Dunn M."/>
            <person name="Durbin K.J."/>
            <person name="Dutta I."/>
            <person name="Eades T."/>
            <person name="Ellwood M."/>
            <person name="Emery-Cohen A."/>
            <person name="Errington H."/>
            <person name="Evans K.L."/>
            <person name="Faulkner L."/>
            <person name="Francis F."/>
            <person name="Frankland J."/>
            <person name="Fraser A.E."/>
            <person name="Galgoczy P."/>
            <person name="Gilbert J."/>
            <person name="Gill R."/>
            <person name="Gloeckner G."/>
            <person name="Gregory S.G."/>
            <person name="Gribble S."/>
            <person name="Griffiths C."/>
            <person name="Grocock R."/>
            <person name="Gu Y."/>
            <person name="Gwilliam R."/>
            <person name="Hamilton C."/>
            <person name="Hart E.A."/>
            <person name="Hawes A."/>
            <person name="Heath P.D."/>
            <person name="Heitmann K."/>
            <person name="Hennig S."/>
            <person name="Hernandez J."/>
            <person name="Hinzmann B."/>
            <person name="Ho S."/>
            <person name="Hoffs M."/>
            <person name="Howden P.J."/>
            <person name="Huckle E.J."/>
            <person name="Hume J."/>
            <person name="Hunt P.J."/>
            <person name="Hunt A.R."/>
            <person name="Isherwood J."/>
            <person name="Jacob L."/>
            <person name="Johnson D."/>
            <person name="Jones S."/>
            <person name="de Jong P.J."/>
            <person name="Joseph S.S."/>
            <person name="Keenan S."/>
            <person name="Kelly S."/>
            <person name="Kershaw J.K."/>
            <person name="Khan Z."/>
            <person name="Kioschis P."/>
            <person name="Klages S."/>
            <person name="Knights A.J."/>
            <person name="Kosiura A."/>
            <person name="Kovar-Smith C."/>
            <person name="Laird G.K."/>
            <person name="Langford C."/>
            <person name="Lawlor S."/>
            <person name="Leversha M."/>
            <person name="Lewis L."/>
            <person name="Liu W."/>
            <person name="Lloyd C."/>
            <person name="Lloyd D.M."/>
            <person name="Loulseged H."/>
            <person name="Loveland J.E."/>
            <person name="Lovell J.D."/>
            <person name="Lozado R."/>
            <person name="Lu J."/>
            <person name="Lyne R."/>
            <person name="Ma J."/>
            <person name="Maheshwari M."/>
            <person name="Matthews L.H."/>
            <person name="McDowall J."/>
            <person name="McLaren S."/>
            <person name="McMurray A."/>
            <person name="Meidl P."/>
            <person name="Meitinger T."/>
            <person name="Milne S."/>
            <person name="Miner G."/>
            <person name="Mistry S.L."/>
            <person name="Morgan M."/>
            <person name="Morris S."/>
            <person name="Mueller I."/>
            <person name="Mullikin J.C."/>
            <person name="Nguyen N."/>
            <person name="Nordsiek G."/>
            <person name="Nyakatura G."/>
            <person name="O'dell C.N."/>
            <person name="Okwuonu G."/>
            <person name="Palmer S."/>
            <person name="Pandian R."/>
            <person name="Parker D."/>
            <person name="Parrish J."/>
            <person name="Pasternak S."/>
            <person name="Patel D."/>
            <person name="Pearce A.V."/>
            <person name="Pearson D.M."/>
            <person name="Pelan S.E."/>
            <person name="Perez L."/>
            <person name="Porter K.M."/>
            <person name="Ramsey Y."/>
            <person name="Reichwald K."/>
            <person name="Rhodes S."/>
            <person name="Ridler K.A."/>
            <person name="Schlessinger D."/>
            <person name="Schueler M.G."/>
            <person name="Sehra H.K."/>
            <person name="Shaw-Smith C."/>
            <person name="Shen H."/>
            <person name="Sheridan E.M."/>
            <person name="Shownkeen R."/>
            <person name="Skuce C.D."/>
            <person name="Smith M.L."/>
            <person name="Sotheran E.C."/>
            <person name="Steingruber H.E."/>
            <person name="Steward C.A."/>
            <person name="Storey R."/>
            <person name="Swann R.M."/>
            <person name="Swarbreck D."/>
            <person name="Tabor P.E."/>
            <person name="Taudien S."/>
            <person name="Taylor T."/>
            <person name="Teague B."/>
            <person name="Thomas K."/>
            <person name="Thorpe A."/>
            <person name="Timms K."/>
            <person name="Tracey A."/>
            <person name="Trevanion S."/>
            <person name="Tromans A.C."/>
            <person name="d'Urso M."/>
            <person name="Verduzco D."/>
            <person name="Villasana D."/>
            <person name="Waldron L."/>
            <person name="Wall M."/>
            <person name="Wang Q."/>
            <person name="Warren J."/>
            <person name="Warry G.L."/>
            <person name="Wei X."/>
            <person name="West A."/>
            <person name="Whitehead S.L."/>
            <person name="Whiteley M.N."/>
            <person name="Wilkinson J.E."/>
            <person name="Willey D.L."/>
            <person name="Williams G."/>
            <person name="Williams L."/>
            <person name="Williamson A."/>
            <person name="Williamson H."/>
            <person name="Wilming L."/>
            <person name="Woodmansey R.L."/>
            <person name="Wray P.W."/>
            <person name="Yen J."/>
            <person name="Zhang J."/>
            <person name="Zhou J."/>
            <person name="Zoghbi H."/>
            <person name="Zorilla S."/>
            <person name="Buck D."/>
            <person name="Reinhardt R."/>
            <person name="Poustka A."/>
            <person name="Rosenthal A."/>
            <person name="Lehrach H."/>
            <person name="Meindl A."/>
            <person name="Minx P.J."/>
            <person name="Hillier L.W."/>
            <person name="Willard H.F."/>
            <person name="Wilson R.K."/>
            <person name="Waterston R.H."/>
            <person name="Rice C.M."/>
            <person name="Vaudin M."/>
            <person name="Coulson A."/>
            <person name="Nelson D.L."/>
            <person name="Weinstock G."/>
            <person name="Sulston J.E."/>
            <person name="Durbin R.M."/>
            <person name="Hubbard T."/>
            <person name="Gibbs R.A."/>
            <person name="Beck S."/>
            <person name="Rogers J."/>
            <person name="Bentley D.R."/>
        </authorList>
    </citation>
    <scope>NUCLEOTIDE SEQUENCE [LARGE SCALE GENOMIC DNA]</scope>
</reference>
<reference key="7">
    <citation type="journal article" date="2004" name="Genome Res.">
        <title>The status, quality, and expansion of the NIH full-length cDNA project: the Mammalian Gene Collection (MGC).</title>
        <authorList>
            <consortium name="The MGC Project Team"/>
        </authorList>
    </citation>
    <scope>NUCLEOTIDE SEQUENCE [LARGE SCALE MRNA] (ISOFORM 1)</scope>
    <source>
        <tissue>Lung</tissue>
    </source>
</reference>
<reference key="8">
    <citation type="submission" date="2008-12" db="UniProtKB">
        <authorList>
            <person name="Bienvenut W.V."/>
            <person name="Lilla S."/>
            <person name="von Kriegsheim A."/>
            <person name="Lempens A."/>
            <person name="Kolch W."/>
        </authorList>
    </citation>
    <scope>PROTEIN SEQUENCE OF 2-10 AND 229-243</scope>
    <scope>CLEAVAGE OF INITIATOR METHIONINE</scope>
    <scope>IDENTIFICATION BY MASS SPECTROMETRY</scope>
    <source>
        <tissue>Ovarian carcinoma</tissue>
    </source>
</reference>
<reference key="9">
    <citation type="journal article" date="1998" name="Biochem. Biophys. Res. Commun.">
        <title>Polar amino acid-rich sequences bind to polyglutamine tracts.</title>
        <authorList>
            <person name="Imafuku I."/>
            <person name="Waragai M."/>
            <person name="Takeuchi S."/>
            <person name="Kanazawa I."/>
            <person name="Kawabata M."/>
            <person name="Mouradian M.M."/>
            <person name="Okazawa H."/>
        </authorList>
    </citation>
    <scope>INTERACTION WITH POU3F2</scope>
</reference>
<reference key="10">
    <citation type="journal article" date="2000" name="Biochem. Biophys. Res. Commun.">
        <title>PQBP-1/Npw38, a nuclear protein binding to the polyglutamine tract, interacts with U5-15kD/dim1p via the carboxyl-terminal domain.</title>
        <authorList>
            <person name="Waragai M."/>
            <person name="Junn E."/>
            <person name="Kajikawa M."/>
            <person name="Takeuchi S."/>
            <person name="Kanazawa I."/>
            <person name="Shibata M."/>
            <person name="Mouradian M.M."/>
            <person name="Okazawa H."/>
        </authorList>
    </citation>
    <scope>INTERACTION WITH TXNL4A</scope>
</reference>
<reference key="11">
    <citation type="journal article" date="2002" name="Neuron">
        <title>Interaction between mutant ataxin-1 and PQBP-1 affects transcription and cell death.</title>
        <authorList>
            <person name="Okazawa H."/>
            <person name="Rich T."/>
            <person name="Chang A."/>
            <person name="Lin X."/>
            <person name="Waragai M."/>
            <person name="Kajikawa M."/>
            <person name="Enokido Y."/>
            <person name="Komuro A."/>
            <person name="Kato S."/>
            <person name="Shibata M."/>
            <person name="Hatanaka H."/>
            <person name="Mouradian M.M."/>
            <person name="Sudol M."/>
            <person name="Kanazawa I."/>
        </authorList>
    </citation>
    <scope>FUNCTION</scope>
    <scope>INTERACTION WITH ATXN1 AND RNA POLYMERASE II LARGE SUBUNIT</scope>
    <scope>SUBCELLULAR LOCATION</scope>
</reference>
<reference key="12">
    <citation type="journal article" date="2003" name="Nat. Genet.">
        <title>Mutations in the polyglutamine binding protein 1 gene cause X-linked mental retardation.</title>
        <authorList>
            <person name="Kalscheuer V.M."/>
            <person name="Freude K."/>
            <person name="Musante L."/>
            <person name="Jensen L.R."/>
            <person name="Yntema H.G."/>
            <person name="Gecz J."/>
            <person name="Sefiani A."/>
            <person name="Hoffmann K."/>
            <person name="Moser B."/>
            <person name="Haas S."/>
            <person name="Gurok U."/>
            <person name="Haesler S."/>
            <person name="Aranda B."/>
            <person name="Nshedjan A."/>
            <person name="Tzschach A."/>
            <person name="Hartmann N."/>
            <person name="Roloff T.C."/>
            <person name="Shoichet S."/>
            <person name="Hagens O."/>
            <person name="Tao J."/>
            <person name="Van Bokhoven H."/>
            <person name="Turner G."/>
            <person name="Chelly J."/>
            <person name="Moraine C."/>
            <person name="Fryns J.-P."/>
            <person name="Nuber U."/>
            <person name="Hoeltzenbein M."/>
            <person name="Scharff C."/>
            <person name="Scherthan H."/>
            <person name="Lenzner S."/>
            <person name="Hamel B.C.J."/>
            <person name="Schweiger S."/>
            <person name="Ropers H.-H."/>
        </authorList>
    </citation>
    <scope>INVOLVEMENT IN RENS1</scope>
</reference>
<reference key="13">
    <citation type="journal article" date="2008" name="Proc. Natl. Acad. Sci. U.S.A.">
        <title>A quantitative atlas of mitotic phosphorylation.</title>
        <authorList>
            <person name="Dephoure N."/>
            <person name="Zhou C."/>
            <person name="Villen J."/>
            <person name="Beausoleil S.A."/>
            <person name="Bakalarski C.E."/>
            <person name="Elledge S.J."/>
            <person name="Gygi S.P."/>
        </authorList>
    </citation>
    <scope>PHOSPHORYLATION [LARGE SCALE ANALYSIS] AT SER-247</scope>
    <scope>IDENTIFICATION BY MASS SPECTROMETRY [LARGE SCALE ANALYSIS]</scope>
    <source>
        <tissue>Cervix carcinoma</tissue>
    </source>
</reference>
<reference key="14">
    <citation type="journal article" date="2009" name="Biochim. Biophys. Acta">
        <title>Polyglutamine tract binding protein-1 is an intrinsically unstructured protein.</title>
        <authorList>
            <person name="Takahashi M."/>
            <person name="Mizuguchi M."/>
            <person name="Shinoda H."/>
            <person name="Aizawa T."/>
            <person name="Demura M."/>
            <person name="Okazawa H."/>
            <person name="Kawano K."/>
        </authorList>
    </citation>
    <scope>DOMAIN</scope>
    <scope>CIRCULAR DICHROISM</scope>
    <scope>NMR</scope>
    <scope>INTERACTION WITH TXNL4A</scope>
</reference>
<reference key="15">
    <citation type="journal article" date="2010" name="Sci. Signal.">
        <title>Quantitative phosphoproteomics reveals widespread full phosphorylation site occupancy during mitosis.</title>
        <authorList>
            <person name="Olsen J.V."/>
            <person name="Vermeulen M."/>
            <person name="Santamaria A."/>
            <person name="Kumar C."/>
            <person name="Miller M.L."/>
            <person name="Jensen L.J."/>
            <person name="Gnad F."/>
            <person name="Cox J."/>
            <person name="Jensen T.S."/>
            <person name="Nigg E.A."/>
            <person name="Brunak S."/>
            <person name="Mann M."/>
        </authorList>
    </citation>
    <scope>PHOSPHORYLATION [LARGE SCALE ANALYSIS] AT SER-94</scope>
    <scope>IDENTIFICATION BY MASS SPECTROMETRY [LARGE SCALE ANALYSIS]</scope>
    <source>
        <tissue>Cervix carcinoma</tissue>
    </source>
</reference>
<reference key="16">
    <citation type="journal article" date="2011" name="BMC Syst. Biol.">
        <title>Initial characterization of the human central proteome.</title>
        <authorList>
            <person name="Burkard T.R."/>
            <person name="Planyavsky M."/>
            <person name="Kaupe I."/>
            <person name="Breitwieser F.P."/>
            <person name="Buerckstuemmer T."/>
            <person name="Bennett K.L."/>
            <person name="Superti-Furga G."/>
            <person name="Colinge J."/>
        </authorList>
    </citation>
    <scope>IDENTIFICATION BY MASS SPECTROMETRY [LARGE SCALE ANALYSIS]</scope>
</reference>
<reference key="17">
    <citation type="journal article" date="2011" name="Eur. J. Med. Genet.">
        <title>A novel frame shift mutation in the PQBP1 gene identified in a Tunisian family with X-linked mental retardation.</title>
        <authorList>
            <person name="Rejeb I."/>
            <person name="Ben Jemaa L."/>
            <person name="Abaied L."/>
            <person name="Kraoua L."/>
            <person name="Saillour Y."/>
            <person name="Maazoul F."/>
            <person name="Chelly J."/>
            <person name="Chaabouni H."/>
        </authorList>
    </citation>
    <scope>INVOLVEMENT IN RENS1</scope>
</reference>
<reference key="18">
    <citation type="journal article" date="2011" name="Hum. Mol. Genet.">
        <title>The X-chromosome-linked intellectual disability protein PQBP1 is a component of neuronal RNA granules and regulates the appearance of stress granules.</title>
        <authorList>
            <person name="Kunde S.A."/>
            <person name="Musante L."/>
            <person name="Grimme A."/>
            <person name="Fischer U."/>
            <person name="Mueller E."/>
            <person name="Wanker E.E."/>
            <person name="Kalscheuer V.M."/>
        </authorList>
    </citation>
    <scope>FUNCTION</scope>
    <scope>SUBCELLULAR LOCATION</scope>
    <scope>INTERACTION WITH CAPRIN1; DDX1; SFPQ AND KHSRP</scope>
</reference>
<reference key="19">
    <citation type="journal article" date="2012" name="Proc. Natl. Acad. Sci. U.S.A.">
        <title>N-terminal acetylome analyses and functional insights of the N-terminal acetyltransferase NatB.</title>
        <authorList>
            <person name="Van Damme P."/>
            <person name="Lasa M."/>
            <person name="Polevoda B."/>
            <person name="Gazquez C."/>
            <person name="Elosegui-Artola A."/>
            <person name="Kim D.S."/>
            <person name="De Juan-Pardo E."/>
            <person name="Demeyer K."/>
            <person name="Hole K."/>
            <person name="Larrea E."/>
            <person name="Timmerman E."/>
            <person name="Prieto J."/>
            <person name="Arnesen T."/>
            <person name="Sherman F."/>
            <person name="Gevaert K."/>
            <person name="Aldabe R."/>
        </authorList>
    </citation>
    <scope>IDENTIFICATION BY MASS SPECTROMETRY [LARGE SCALE ANALYSIS]</scope>
</reference>
<reference key="20">
    <citation type="journal article" date="2013" name="Genes Dev.">
        <title>PQBP1, a factor linked to intellectual disability, affects alternative splicing associated with neurite outgrowth.</title>
        <authorList>
            <person name="Wang Q."/>
            <person name="Moore M.J."/>
            <person name="Adelmant G."/>
            <person name="Marto J.A."/>
            <person name="Silver P.A."/>
        </authorList>
    </citation>
    <scope>FUNCTION</scope>
    <scope>INTERACTION WITH SF3B1 AND WBP11</scope>
    <scope>SUBUNIT</scope>
    <scope>SUBCELLULAR LOCATION</scope>
    <scope>CHARACTERIZATION OF VARIANT RENS1 CYS-65</scope>
</reference>
<reference key="21">
    <citation type="journal article" date="2013" name="J. Proteome Res.">
        <title>Toward a comprehensive characterization of a human cancer cell phosphoproteome.</title>
        <authorList>
            <person name="Zhou H."/>
            <person name="Di Palma S."/>
            <person name="Preisinger C."/>
            <person name="Peng M."/>
            <person name="Polat A.N."/>
            <person name="Heck A.J."/>
            <person name="Mohammed S."/>
        </authorList>
    </citation>
    <scope>IDENTIFICATION BY MASS SPECTROMETRY [LARGE SCALE ANALYSIS]</scope>
    <source>
        <tissue>Erythroleukemia</tissue>
    </source>
</reference>
<reference key="22">
    <citation type="journal article" date="2014" name="J. Proteomics">
        <title>An enzyme assisted RP-RPLC approach for in-depth analysis of human liver phosphoproteome.</title>
        <authorList>
            <person name="Bian Y."/>
            <person name="Song C."/>
            <person name="Cheng K."/>
            <person name="Dong M."/>
            <person name="Wang F."/>
            <person name="Huang J."/>
            <person name="Sun D."/>
            <person name="Wang L."/>
            <person name="Ye M."/>
            <person name="Zou H."/>
        </authorList>
    </citation>
    <scope>IDENTIFICATION BY MASS SPECTROMETRY [LARGE SCALE ANALYSIS]</scope>
    <source>
        <tissue>Liver</tissue>
    </source>
</reference>
<reference key="23">
    <citation type="journal article" date="2015" name="Cell">
        <title>PQBP1 is a proximal sensor of the cGAS-dependent innate response to HIV-1.</title>
        <authorList>
            <person name="Yoh S.M."/>
            <person name="Schneider M."/>
            <person name="Seifried J."/>
            <person name="Soonthornvacharin S."/>
            <person name="Akleh R.E."/>
            <person name="Olivieri K.C."/>
            <person name="De Jesus P.D."/>
            <person name="Ruan C."/>
            <person name="de Castro E."/>
            <person name="Ruiz P.A."/>
            <person name="Germanaud D."/>
            <person name="des Portes V."/>
            <person name="Garcia-Sastre A."/>
            <person name="Koenig R."/>
            <person name="Chanda S.K."/>
        </authorList>
    </citation>
    <scope>FUNCTION</scope>
    <scope>INTERACTION WITH CGAS</scope>
    <scope>CHARACTERIZATION OF VARIANT RENS1 CYS-65</scope>
</reference>
<reference key="24">
    <citation type="journal article" date="2016" name="FEBS Lett.">
        <title>Allosteric modulation of the binding affinity between PQBP1 and the spliceosomal protein U5-15kD.</title>
        <authorList>
            <person name="Mizuguchi M."/>
            <person name="Obita T."/>
            <person name="Kajiyama A."/>
            <person name="Kozakai Y."/>
            <person name="Nakai T."/>
            <person name="Nabeshima Y."/>
            <person name="Okazawa H."/>
        </authorList>
    </citation>
    <scope>INTERACTION WITH TXNL4A AND WBP11</scope>
</reference>
<reference key="25">
    <citation type="journal article" date="2018" name="Neurochem. Int.">
        <title>PQBP1, an intrinsically disordered/denatured protein at the crossroad of intellectual disability and neurodegenerative diseases.</title>
        <authorList>
            <person name="Okazawa H."/>
        </authorList>
    </citation>
    <scope>REVIEW</scope>
</reference>
<reference key="26">
    <citation type="journal article" date="2014" name="Nat. Commun.">
        <title>Mutations in the PQBP1 gene prevent its interaction with the spliceosomal protein U5-15 kD.</title>
        <authorList>
            <person name="Mizuguchi M."/>
            <person name="Obita T."/>
            <person name="Serita T."/>
            <person name="Kojima R."/>
            <person name="Nabeshima Y."/>
            <person name="Okazawa H."/>
        </authorList>
    </citation>
    <scope>X-RAY CRYSTALLOGRAPHY (2.10 ANGSTROMS) OF 223-265 IN COMPLEXES WITH TXNL4A AND CD2BP2</scope>
    <scope>INTERACTION WITH TXNL4A AND CD2BP2</scope>
    <scope>DOMAIN</scope>
    <scope>MUTAGENESIS OF TYR-245; PRO-248; VAL-251; LEU-252; ARG-253 AND ASN-255</scope>
</reference>
<reference key="27">
    <citation type="journal article" date="2006" name="J. Med. Genet.">
        <title>Golabi-Ito-Hall syndrome results from a missense mutation in the WW domain of the PQBP1 gene.</title>
        <authorList>
            <person name="Lubs H."/>
            <person name="Abidi F.E."/>
            <person name="Echeverri R."/>
            <person name="Holloway L."/>
            <person name="Meindl A."/>
            <person name="Stevenson R.E."/>
            <person name="Schwartz C.E."/>
        </authorList>
    </citation>
    <scope>VARIANT RENS1 CYS-65</scope>
</reference>
<reference key="28">
    <citation type="journal article" date="2006" name="Science">
        <title>The consensus coding sequences of human breast and colorectal cancers.</title>
        <authorList>
            <person name="Sjoeblom T."/>
            <person name="Jones S."/>
            <person name="Wood L.D."/>
            <person name="Parsons D.W."/>
            <person name="Lin J."/>
            <person name="Barber T.D."/>
            <person name="Mandelker D."/>
            <person name="Leary R.J."/>
            <person name="Ptak J."/>
            <person name="Silliman N."/>
            <person name="Szabo S."/>
            <person name="Buckhaults P."/>
            <person name="Farrell C."/>
            <person name="Meeh P."/>
            <person name="Markowitz S.D."/>
            <person name="Willis J."/>
            <person name="Dawson D."/>
            <person name="Willson J.K.V."/>
            <person name="Gazdar A.F."/>
            <person name="Hartigan J."/>
            <person name="Wu L."/>
            <person name="Liu C."/>
            <person name="Parmigiani G."/>
            <person name="Park B.H."/>
            <person name="Bachman K.E."/>
            <person name="Papadopoulos N."/>
            <person name="Vogelstein B."/>
            <person name="Kinzler K.W."/>
            <person name="Velculescu V.E."/>
        </authorList>
    </citation>
    <scope>VARIANT [LARGE SCALE ANALYSIS] TRP-224</scope>
</reference>
<reference key="29">
    <citation type="journal article" date="2010" name="J. Biol. Chem.">
        <title>Y65C missense mutation in the WW domain of the Golabi-Ito-Hall syndrome protein PQBP1 affects its binding activity and deregulates pre-mRNA splicing.</title>
        <authorList>
            <person name="Tapia V.E."/>
            <person name="Nicolaescu E."/>
            <person name="McDonald C.B."/>
            <person name="Musi V."/>
            <person name="Oka T."/>
            <person name="Inayoshi Y."/>
            <person name="Satteson A.C."/>
            <person name="Mazack V."/>
            <person name="Humbert J."/>
            <person name="Gaffney C.J."/>
            <person name="Beullens M."/>
            <person name="Schwartz C.E."/>
            <person name="Landgraf C."/>
            <person name="Volkmer R."/>
            <person name="Pastore A."/>
            <person name="Farooq A."/>
            <person name="Bollen M."/>
            <person name="Sudol M."/>
        </authorList>
    </citation>
    <scope>CHARACTERIZATION OF VARIANT RENS1 CYS-65</scope>
    <scope>INTERACTION WITH WBP11 AND ATN1</scope>
    <scope>DOMAIN</scope>
    <scope>FUNCTION</scope>
</reference>
<reference key="30">
    <citation type="journal article" date="2015" name="Neuron">
        <title>Targeted DNA Sequencing from Autism Spectrum Disorder Brains Implicates Multiple Genetic Mechanisms.</title>
        <authorList>
            <person name="D'Gama A.M."/>
            <person name="Pochareddy S."/>
            <person name="Li M."/>
            <person name="Jamuar S.S."/>
            <person name="Reiff R.E."/>
            <person name="Lam A.T."/>
            <person name="Sestan N."/>
            <person name="Walsh C.A."/>
        </authorList>
    </citation>
    <scope>VARIANT LEU-244</scope>
</reference>
<sequence length="265" mass="30472">MPLPVALQTRLAKRGILKHLEPEPEEEIIAEDYDDDPVDYEATRLEGLPPSWYKVFDPSCGLPYYWNADTDLVSWLSPHDPNSVVTKSAKKLRSSNADAEEKLDRSHDKSDRGHDKSDRSHEKLDRGHDKSDRGHDKSDRDRERGYDKVDRERERDRERDRDRGYDKADREEGKERRHHRREELAPYPKSKKAVSRKDEELDPMDPSSYSDAPRGTWSTGLPKRNEAKTGADTTAAGPLFQQRPYPSPGAVLRANAEASRTKQQD</sequence>
<evidence type="ECO:0000250" key="1">
    <source>
        <dbReference type="UniProtKB" id="Q91VJ5"/>
    </source>
</evidence>
<evidence type="ECO:0000255" key="2">
    <source>
        <dbReference type="PROSITE-ProRule" id="PRU00224"/>
    </source>
</evidence>
<evidence type="ECO:0000256" key="3">
    <source>
        <dbReference type="SAM" id="MobiDB-lite"/>
    </source>
</evidence>
<evidence type="ECO:0000269" key="4">
    <source>
    </source>
</evidence>
<evidence type="ECO:0000269" key="5">
    <source>
    </source>
</evidence>
<evidence type="ECO:0000269" key="6">
    <source>
    </source>
</evidence>
<evidence type="ECO:0000269" key="7">
    <source>
    </source>
</evidence>
<evidence type="ECO:0000269" key="8">
    <source>
    </source>
</evidence>
<evidence type="ECO:0000269" key="9">
    <source>
    </source>
</evidence>
<evidence type="ECO:0000269" key="10">
    <source>
    </source>
</evidence>
<evidence type="ECO:0000269" key="11">
    <source>
    </source>
</evidence>
<evidence type="ECO:0000269" key="12">
    <source>
    </source>
</evidence>
<evidence type="ECO:0000269" key="13">
    <source>
    </source>
</evidence>
<evidence type="ECO:0000269" key="14">
    <source>
    </source>
</evidence>
<evidence type="ECO:0000269" key="15">
    <source>
    </source>
</evidence>
<evidence type="ECO:0000269" key="16">
    <source>
    </source>
</evidence>
<evidence type="ECO:0000269" key="17">
    <source>
    </source>
</evidence>
<evidence type="ECO:0000269" key="18">
    <source>
    </source>
</evidence>
<evidence type="ECO:0000269" key="19">
    <source>
    </source>
</evidence>
<evidence type="ECO:0000269" key="20">
    <source>
    </source>
</evidence>
<evidence type="ECO:0000269" key="21">
    <source ref="8"/>
</evidence>
<evidence type="ECO:0000303" key="22">
    <source>
    </source>
</evidence>
<evidence type="ECO:0000303" key="23">
    <source>
    </source>
</evidence>
<evidence type="ECO:0000303" key="24">
    <source>
    </source>
</evidence>
<evidence type="ECO:0000303" key="25">
    <source ref="4"/>
</evidence>
<evidence type="ECO:0000305" key="26"/>
<evidence type="ECO:0000312" key="27">
    <source>
        <dbReference type="HGNC" id="HGNC:9330"/>
    </source>
</evidence>
<evidence type="ECO:0007744" key="28">
    <source>
    </source>
</evidence>
<evidence type="ECO:0007744" key="29">
    <source>
    </source>
</evidence>
<evidence type="ECO:0007829" key="30">
    <source>
        <dbReference type="PDB" id="4BWQ"/>
    </source>
</evidence>
<proteinExistence type="evidence at protein level"/>
<accession>O60828</accession>
<accession>C9JQA1</accession>
<accession>Q4VY25</accession>
<accession>Q4VY26</accession>
<accession>Q4VY27</accession>
<accession>Q4VY29</accession>
<accession>Q4VY30</accession>
<accession>Q4VY34</accession>
<accession>Q4VY35</accession>
<accession>Q4VY36</accession>
<accession>Q4VY37</accession>
<accession>Q4VY38</accession>
<accession>Q9GZP2</accession>
<accession>Q9GZU4</accession>
<accession>Q9GZZ4</accession>
<comment type="function">
    <text evidence="4 5 7 12 14 15 17">Intrinsically disordered protein that acts as a scaffold, and which is involved in different processes, such as pre-mRNA splicing, transcription regulation, innate immunity and neuron development (PubMed:10198427, PubMed:10332029, PubMed:12062018, PubMed:20410308, PubMed:23512658). Interacts with splicing-related factors via the intrinsically disordered region and regulates alternative splicing of target pre-mRNA species (PubMed:10332029, PubMed:12062018, PubMed:20410308, PubMed:23512658). May suppress the ability of POU3F2 to transactivate the DRD1 gene in a POU3F2 dependent manner. Can activate transcription directly or via association with the transcription machinery (PubMed:10198427). May be involved in ATXN1 mutant-induced cell death (PubMed:12062018). The interaction with ATXN1 mutant reduces levels of phosphorylated RNA polymerase II large subunit (PubMed:12062018). Involved in the assembly of cytoplasmic stress granule, possibly by participating in the transport of neuronal RNA granules (PubMed:21933836). Also acts as an innate immune sensor of infection by retroviruses, such as HIV, by detecting the presence of reverse-transcribed DNA in the cytosol (PubMed:26046437). Directly binds retroviral reverse-transcribed DNA in the cytosol and interacts with CGAS, leading to activate the cGAS-STING signaling pathway, triggering type-I interferon production (PubMed:26046437).</text>
</comment>
<comment type="subunit">
    <text evidence="5 6 7 11 12 14 15 16 19 20">Interacts with POU3F2/Brn-2, ATXN1, TXNL4A, HTT and AR (PubMed:10332029, PubMed:10873650, PubMed:19303059, PubMed:24781215). Interaction with ATXN1 correlates positively with the length of the polyglutamine tract (PubMed:12062018). Interacts with RNA polymerase II large subunit in a phosphorylation-dependent manner (PubMed:12062018). Forms a ternary complex with ATXN1 mutant and phosphorylated RNA polymerase II (PubMed:12062018). Interacts (via C-terminus) with TXNL4A and CD2BP2 (PubMed:10873650, PubMed:19303059, PubMed:24781215). Interacts (via WW domain) with ATN1 and SF3B1, and may interact with additional splice factors (PubMed:20410308, PubMed:23512658). Interacts (via WW domain) with WBP11; Leading to reduce interaction between PQBP1 and TXNL4A (PubMed:20410308, PubMed:23512658, PubMed:27314904). Interacts with CAPRIN1 (PubMed:21933836). Interacts with DDX1 (PubMed:21933836). Interacts with SFPQ (PubMed:21933836). Interacts with KHSRP (PubMed:21933836).</text>
</comment>
<comment type="interaction">
    <interactant intactId="EBI-713867">
        <id>O60828</id>
    </interactant>
    <interactant intactId="EBI-930964">
        <id>P54253</id>
        <label>ATXN1</label>
    </interactant>
    <organismsDiffer>false</organismsDiffer>
    <experiments>3</experiments>
</comment>
<comment type="interaction">
    <interactant intactId="EBI-713867">
        <id>O60828</id>
    </interactant>
    <interactant intactId="EBI-618309">
        <id>Q08379</id>
        <label>GOLGA2</label>
    </interactant>
    <organismsDiffer>false</organismsDiffer>
    <experiments>6</experiments>
</comment>
<comment type="interaction">
    <interactant intactId="EBI-713867">
        <id>O60828</id>
    </interactant>
    <interactant intactId="EBI-466029">
        <id>P42858</id>
        <label>HTT</label>
    </interactant>
    <organismsDiffer>false</organismsDiffer>
    <experiments>3</experiments>
</comment>
<comment type="interaction">
    <interactant intactId="EBI-713867">
        <id>O60828</id>
    </interactant>
    <interactant intactId="EBI-741037">
        <id>Q9BRK4</id>
        <label>LZTS2</label>
    </interactant>
    <organismsDiffer>false</organismsDiffer>
    <experiments>6</experiments>
</comment>
<comment type="interaction">
    <interactant intactId="EBI-713867">
        <id>O60828</id>
    </interactant>
    <interactant intactId="EBI-1004115">
        <id>Q15691</id>
        <label>MAPRE1</label>
    </interactant>
    <organismsDiffer>false</organismsDiffer>
    <experiments>6</experiments>
</comment>
<comment type="interaction">
    <interactant intactId="EBI-713867">
        <id>O60828</id>
    </interactant>
    <interactant intactId="EBI-714455">
        <id>Q9Y2W2</id>
        <label>WBP11</label>
    </interactant>
    <organismsDiffer>false</organismsDiffer>
    <experiments>13</experiments>
</comment>
<comment type="subcellular location">
    <subcellularLocation>
        <location evidence="4 5 7 15">Nucleus</location>
    </subcellularLocation>
    <subcellularLocation>
        <location evidence="1">Nucleus speckle</location>
    </subcellularLocation>
    <subcellularLocation>
        <location evidence="14">Cytoplasmic granule</location>
    </subcellularLocation>
    <text evidence="1 5 7 14">Colocalizes with SRSF2 in nuclear speckles (By similarity). Colocalized with POU3F2 (PubMed:10332029). Colocalized with ATXN1 in nuclear inclusion bodies (PubMed:12062018). Localizes to cytoplasmic stress granules (PubMed:21933836).</text>
</comment>
<comment type="alternative products">
    <event type="alternative splicing"/>
    <isoform>
        <id>O60828-1</id>
        <name>1</name>
        <name>PQBP-1</name>
        <sequence type="displayed"/>
    </isoform>
    <isoform>
        <id>O60828-2</id>
        <name>2</name>
        <sequence type="described" ref="VSP_015909"/>
    </isoform>
    <isoform>
        <id>O60828-3</id>
        <name>3</name>
        <name>PQBP-1b/c</name>
        <sequence type="described" ref="VSP_015908 VSP_015910"/>
    </isoform>
    <isoform>
        <id>O60828-4</id>
        <name>4</name>
        <name>PQBP-1d</name>
        <sequence type="described" ref="VSP_015903"/>
    </isoform>
    <isoform>
        <id>O60828-5</id>
        <name>5</name>
        <sequence type="described" ref="VSP_015900"/>
    </isoform>
    <isoform>
        <id>O60828-6</id>
        <name>6</name>
        <sequence type="described" ref="VSP_015906 VSP_015907"/>
    </isoform>
    <isoform>
        <id>O60828-7</id>
        <name>7</name>
        <sequence type="described" ref="VSP_015904 VSP_015905"/>
    </isoform>
    <isoform>
        <id>O60828-8</id>
        <name>8</name>
        <name>PQBP-1a</name>
        <sequence type="described" ref="VSP_015896 VSP_015902"/>
    </isoform>
    <isoform>
        <id>O60828-9</id>
        <name>9</name>
        <sequence type="described" ref="VSP_015899 VSP_015901"/>
    </isoform>
    <isoform>
        <id>O60828-10</id>
        <name>10</name>
        <sequence type="described" ref="VSP_015897 VSP_015898"/>
    </isoform>
</comment>
<comment type="tissue specificity">
    <text evidence="4 5">Widely expressed with high level in heart, skeletal muscle, pancreas, spleen, thymus, prostate, ovary, small intestine and peripheral blood leukocytes.</text>
</comment>
<comment type="domain">
    <text evidence="12 16">The WW domain may play a role as a transcriptional activator directly or via association with the transcription machinery. The WW domain mediates interaction with WBP11, ATN1, SF3B1 and the C-terminal domain of the RNA polymerase II large subunit.</text>
</comment>
<comment type="domain">
    <text evidence="11 16">Except for the WW domain, the protein is intrinsically disordered.</text>
</comment>
<comment type="disease" evidence="8 9 12 13 15 17">
    <disease id="DI-02260">
        <name>Renpenning syndrome 1</name>
        <acronym>RENS1</acronym>
        <description>An X-linked syndrome characterized by intellectual disability, microcephaly, short stature, and small testes. The craniofacies tends to be narrow and tall with upslanting palpebral fissures, abnormal nasal configuration, cupped ears, and short philtrum. The nose may appear long or bulbous, with overhanging columella. Less consistent manifestations include ocular colobomas, cardiac malformations, cleft palate, and anal anomalies.</description>
        <dbReference type="MIM" id="309500"/>
    </disease>
    <text>The disease is caused by variants affecting the gene represented in this entry.</text>
</comment>
<dbReference type="EMBL" id="AJ242829">
    <property type="protein sequence ID" value="CAB44309.1"/>
    <property type="molecule type" value="mRNA"/>
</dbReference>
<dbReference type="EMBL" id="AB016533">
    <property type="protein sequence ID" value="BAA76400.1"/>
    <property type="molecule type" value="mRNA"/>
</dbReference>
<dbReference type="EMBL" id="AB041832">
    <property type="protein sequence ID" value="BAB16702.1"/>
    <property type="molecule type" value="Genomic_DNA"/>
</dbReference>
<dbReference type="EMBL" id="AB041832">
    <property type="protein sequence ID" value="BAB16703.1"/>
    <property type="molecule type" value="Genomic_DNA"/>
</dbReference>
<dbReference type="EMBL" id="AB041832">
    <property type="protein sequence ID" value="BAB16704.1"/>
    <property type="molecule type" value="Genomic_DNA"/>
</dbReference>
<dbReference type="EMBL" id="AB041832">
    <property type="protein sequence ID" value="BAB16705.1"/>
    <property type="molecule type" value="Genomic_DNA"/>
</dbReference>
<dbReference type="EMBL" id="AB041833">
    <property type="protein sequence ID" value="BAB16706.1"/>
    <property type="molecule type" value="mRNA"/>
</dbReference>
<dbReference type="EMBL" id="AB041834">
    <property type="protein sequence ID" value="BAB16707.1"/>
    <property type="molecule type" value="mRNA"/>
</dbReference>
<dbReference type="EMBL" id="AB041835">
    <property type="protein sequence ID" value="BAB16708.1"/>
    <property type="molecule type" value="mRNA"/>
</dbReference>
<dbReference type="EMBL" id="AB041836">
    <property type="protein sequence ID" value="BAB16709.1"/>
    <property type="molecule type" value="mRNA"/>
</dbReference>
<dbReference type="EMBL" id="AJ973593">
    <property type="protein sequence ID" value="CAJ00537.1"/>
    <property type="molecule type" value="mRNA"/>
</dbReference>
<dbReference type="EMBL" id="AJ973594">
    <property type="protein sequence ID" value="CAJ00538.1"/>
    <property type="molecule type" value="mRNA"/>
</dbReference>
<dbReference type="EMBL" id="AJ973595">
    <property type="protein sequence ID" value="CAJ00539.1"/>
    <property type="molecule type" value="mRNA"/>
</dbReference>
<dbReference type="EMBL" id="AJ973596">
    <property type="protein sequence ID" value="CAJ00540.1"/>
    <property type="molecule type" value="mRNA"/>
</dbReference>
<dbReference type="EMBL" id="AJ973597">
    <property type="protein sequence ID" value="CAJ00541.1"/>
    <property type="molecule type" value="mRNA"/>
</dbReference>
<dbReference type="EMBL" id="AJ973598">
    <property type="protein sequence ID" value="CAJ00542.1"/>
    <property type="molecule type" value="mRNA"/>
</dbReference>
<dbReference type="EMBL" id="AJ973599">
    <property type="protein sequence ID" value="CAJ00543.1"/>
    <property type="molecule type" value="mRNA"/>
</dbReference>
<dbReference type="EMBL" id="AJ973600">
    <property type="protein sequence ID" value="CAJ00544.1"/>
    <property type="molecule type" value="mRNA"/>
</dbReference>
<dbReference type="EMBL" id="AJ973601">
    <property type="protein sequence ID" value="CAJ00545.1"/>
    <property type="molecule type" value="mRNA"/>
</dbReference>
<dbReference type="EMBL" id="AJ973602">
    <property type="protein sequence ID" value="CAJ00546.1"/>
    <property type="molecule type" value="mRNA"/>
</dbReference>
<dbReference type="EMBL" id="AJ973603">
    <property type="protein sequence ID" value="CAJ00547.1"/>
    <property type="molecule type" value="mRNA"/>
</dbReference>
<dbReference type="EMBL" id="AJ973605">
    <property type="protein sequence ID" value="CAJ00548.1"/>
    <property type="molecule type" value="mRNA"/>
</dbReference>
<dbReference type="EMBL" id="AJ973606">
    <property type="protein sequence ID" value="CAJ00549.1"/>
    <property type="molecule type" value="mRNA"/>
</dbReference>
<dbReference type="EMBL" id="AJ973607">
    <property type="protein sequence ID" value="CAJ00550.1"/>
    <property type="molecule type" value="mRNA"/>
</dbReference>
<dbReference type="EMBL" id="AJ005893">
    <property type="protein sequence ID" value="CAA06750.1"/>
    <property type="molecule type" value="mRNA"/>
</dbReference>
<dbReference type="EMBL" id="AC233300">
    <property type="status" value="NOT_ANNOTATED_CDS"/>
    <property type="molecule type" value="Genomic_DNA"/>
</dbReference>
<dbReference type="EMBL" id="BC012358">
    <property type="protein sequence ID" value="AAH12358.1"/>
    <property type="molecule type" value="mRNA"/>
</dbReference>
<dbReference type="CCDS" id="CCDS14309.1">
    <molecule id="O60828-1"/>
</dbReference>
<dbReference type="CCDS" id="CCDS55412.1">
    <molecule id="O60828-4"/>
</dbReference>
<dbReference type="RefSeq" id="NP_001027553.1">
    <molecule id="O60828-1"/>
    <property type="nucleotide sequence ID" value="NM_001032381.2"/>
</dbReference>
<dbReference type="RefSeq" id="NP_001027554.1">
    <molecule id="O60828-1"/>
    <property type="nucleotide sequence ID" value="NM_001032382.2"/>
</dbReference>
<dbReference type="RefSeq" id="NP_001027555.1">
    <molecule id="O60828-1"/>
    <property type="nucleotide sequence ID" value="NM_001032383.2"/>
</dbReference>
<dbReference type="RefSeq" id="NP_001027556.1">
    <molecule id="O60828-1"/>
    <property type="nucleotide sequence ID" value="NM_001032384.1"/>
</dbReference>
<dbReference type="RefSeq" id="NP_001161461.1">
    <molecule id="O60828-2"/>
    <property type="nucleotide sequence ID" value="NM_001167989.2"/>
</dbReference>
<dbReference type="RefSeq" id="NP_001161462.1">
    <property type="nucleotide sequence ID" value="NM_001167990.1"/>
</dbReference>
<dbReference type="RefSeq" id="NP_001161464.1">
    <molecule id="O60828-5"/>
    <property type="nucleotide sequence ID" value="NM_001167992.1"/>
</dbReference>
<dbReference type="RefSeq" id="NP_005701.1">
    <molecule id="O60828-1"/>
    <property type="nucleotide sequence ID" value="NM_005710.2"/>
</dbReference>
<dbReference type="RefSeq" id="NP_652766.1">
    <molecule id="O60828-4"/>
    <property type="nucleotide sequence ID" value="NM_144495.3"/>
</dbReference>
<dbReference type="RefSeq" id="XP_005272628.1">
    <molecule id="O60828-2"/>
    <property type="nucleotide sequence ID" value="XM_005272571.4"/>
</dbReference>
<dbReference type="RefSeq" id="XP_005272629.1">
    <molecule id="O60828-4"/>
    <property type="nucleotide sequence ID" value="XM_005272572.5"/>
</dbReference>
<dbReference type="RefSeq" id="XP_011542186.1">
    <molecule id="O60828-1"/>
    <property type="nucleotide sequence ID" value="XM_011543884.3"/>
</dbReference>
<dbReference type="RefSeq" id="XP_016884696.1">
    <molecule id="O60828-2"/>
    <property type="nucleotide sequence ID" value="XM_017029207.2"/>
</dbReference>
<dbReference type="RefSeq" id="XP_047297709.1">
    <molecule id="O60828-2"/>
    <property type="nucleotide sequence ID" value="XM_047441753.1"/>
</dbReference>
<dbReference type="RefSeq" id="XP_047297710.1">
    <molecule id="O60828-4"/>
    <property type="nucleotide sequence ID" value="XM_047441754.1"/>
</dbReference>
<dbReference type="RefSeq" id="XP_054182305.1">
    <molecule id="O60828-1"/>
    <property type="nucleotide sequence ID" value="XM_054326330.1"/>
</dbReference>
<dbReference type="RefSeq" id="XP_054182306.1">
    <molecule id="O60828-2"/>
    <property type="nucleotide sequence ID" value="XM_054326331.1"/>
</dbReference>
<dbReference type="RefSeq" id="XP_054182307.1">
    <molecule id="O60828-2"/>
    <property type="nucleotide sequence ID" value="XM_054326332.1"/>
</dbReference>
<dbReference type="RefSeq" id="XP_054182308.1">
    <molecule id="O60828-2"/>
    <property type="nucleotide sequence ID" value="XM_054326333.1"/>
</dbReference>
<dbReference type="RefSeq" id="XP_054182309.1">
    <molecule id="O60828-4"/>
    <property type="nucleotide sequence ID" value="XM_054326334.1"/>
</dbReference>
<dbReference type="RefSeq" id="XP_054182310.1">
    <molecule id="O60828-4"/>
    <property type="nucleotide sequence ID" value="XM_054326335.1"/>
</dbReference>
<dbReference type="RefSeq" id="XP_054189368.1">
    <molecule id="O60828-1"/>
    <property type="nucleotide sequence ID" value="XM_054333393.1"/>
</dbReference>
<dbReference type="RefSeq" id="XP_054189369.1">
    <molecule id="O60828-2"/>
    <property type="nucleotide sequence ID" value="XM_054333394.1"/>
</dbReference>
<dbReference type="RefSeq" id="XP_054189370.1">
    <molecule id="O60828-2"/>
    <property type="nucleotide sequence ID" value="XM_054333395.1"/>
</dbReference>
<dbReference type="RefSeq" id="XP_054189371.1">
    <molecule id="O60828-2"/>
    <property type="nucleotide sequence ID" value="XM_054333396.1"/>
</dbReference>
<dbReference type="RefSeq" id="XP_054189372.1">
    <molecule id="O60828-4"/>
    <property type="nucleotide sequence ID" value="XM_054333397.1"/>
</dbReference>
<dbReference type="RefSeq" id="XP_054189373.1">
    <molecule id="O60828-4"/>
    <property type="nucleotide sequence ID" value="XM_054333398.1"/>
</dbReference>
<dbReference type="PDB" id="4BWQ">
    <property type="method" value="X-ray"/>
    <property type="resolution" value="2.10 A"/>
    <property type="chains" value="B/D/F/H=223-265"/>
</dbReference>
<dbReference type="PDB" id="4BWS">
    <property type="method" value="X-ray"/>
    <property type="resolution" value="2.50 A"/>
    <property type="chains" value="B/E=229-265"/>
</dbReference>
<dbReference type="PDB" id="4CDO">
    <property type="method" value="X-ray"/>
    <property type="resolution" value="2.50 A"/>
    <property type="chains" value="A/C=223-265"/>
</dbReference>
<dbReference type="PDBsum" id="4BWQ"/>
<dbReference type="PDBsum" id="4BWS"/>
<dbReference type="PDBsum" id="4CDO"/>
<dbReference type="SASBDB" id="O60828"/>
<dbReference type="SMR" id="O60828"/>
<dbReference type="BioGRID" id="115393">
    <property type="interactions" value="104"/>
</dbReference>
<dbReference type="CORUM" id="O60828"/>
<dbReference type="FunCoup" id="O60828">
    <property type="interactions" value="3231"/>
</dbReference>
<dbReference type="IntAct" id="O60828">
    <property type="interactions" value="45"/>
</dbReference>
<dbReference type="MINT" id="O60828"/>
<dbReference type="STRING" id="9606.ENSP00000498362"/>
<dbReference type="GlyGen" id="O60828">
    <property type="glycosylation" value="2 sites, 1 O-linked glycan (2 sites)"/>
</dbReference>
<dbReference type="iPTMnet" id="O60828"/>
<dbReference type="PhosphoSitePlus" id="O60828"/>
<dbReference type="SwissPalm" id="O60828"/>
<dbReference type="BioMuta" id="PQBP1"/>
<dbReference type="jPOST" id="O60828"/>
<dbReference type="MassIVE" id="O60828"/>
<dbReference type="PaxDb" id="9606-ENSP00000218224"/>
<dbReference type="PeptideAtlas" id="O60828"/>
<dbReference type="ProteomicsDB" id="11217"/>
<dbReference type="ProteomicsDB" id="49611">
    <molecule id="O60828-1"/>
</dbReference>
<dbReference type="ProteomicsDB" id="49612">
    <molecule id="O60828-10"/>
</dbReference>
<dbReference type="ProteomicsDB" id="49613">
    <molecule id="O60828-2"/>
</dbReference>
<dbReference type="ProteomicsDB" id="49614">
    <molecule id="O60828-3"/>
</dbReference>
<dbReference type="ProteomicsDB" id="49615">
    <molecule id="O60828-4"/>
</dbReference>
<dbReference type="ProteomicsDB" id="49616">
    <molecule id="O60828-5"/>
</dbReference>
<dbReference type="ProteomicsDB" id="49617">
    <molecule id="O60828-6"/>
</dbReference>
<dbReference type="ProteomicsDB" id="49618">
    <molecule id="O60828-7"/>
</dbReference>
<dbReference type="ProteomicsDB" id="49619">
    <molecule id="O60828-8"/>
</dbReference>
<dbReference type="ProteomicsDB" id="49620">
    <molecule id="O60828-9"/>
</dbReference>
<dbReference type="Pumba" id="O60828"/>
<dbReference type="TopDownProteomics" id="O60828-1">
    <molecule id="O60828-1"/>
</dbReference>
<dbReference type="TopDownProteomics" id="O60828-2">
    <molecule id="O60828-2"/>
</dbReference>
<dbReference type="Antibodypedia" id="454">
    <property type="antibodies" value="165 antibodies from 26 providers"/>
</dbReference>
<dbReference type="DNASU" id="10084"/>
<dbReference type="Ensembl" id="ENST00000218224.9">
    <molecule id="O60828-1"/>
    <property type="protein sequence ID" value="ENSP00000218224.4"/>
    <property type="gene ID" value="ENSG00000102103.18"/>
</dbReference>
<dbReference type="Ensembl" id="ENST00000247140.8">
    <molecule id="O60828-4"/>
    <property type="protein sequence ID" value="ENSP00000247140.4"/>
    <property type="gene ID" value="ENSG00000102103.18"/>
</dbReference>
<dbReference type="Ensembl" id="ENST00000376563.6">
    <molecule id="O60828-1"/>
    <property type="protein sequence ID" value="ENSP00000365747.1"/>
    <property type="gene ID" value="ENSG00000102103.18"/>
</dbReference>
<dbReference type="Ensembl" id="ENST00000376566.8">
    <molecule id="O60828-4"/>
    <property type="protein sequence ID" value="ENSP00000365750.4"/>
    <property type="gene ID" value="ENSG00000102103.18"/>
</dbReference>
<dbReference type="Ensembl" id="ENST00000396763.6">
    <molecule id="O60828-1"/>
    <property type="protein sequence ID" value="ENSP00000379985.1"/>
    <property type="gene ID" value="ENSG00000102103.18"/>
</dbReference>
<dbReference type="Ensembl" id="ENST00000443648.6">
    <molecule id="O60828-1"/>
    <property type="protein sequence ID" value="ENSP00000414861.2"/>
    <property type="gene ID" value="ENSG00000102103.18"/>
</dbReference>
<dbReference type="Ensembl" id="ENST00000447146.7">
    <molecule id="O60828-1"/>
    <property type="protein sequence ID" value="ENSP00000391759.2"/>
    <property type="gene ID" value="ENSG00000102103.18"/>
</dbReference>
<dbReference type="Ensembl" id="ENST00000465859.2">
    <molecule id="O60828-7"/>
    <property type="protein sequence ID" value="ENSP00000508445.1"/>
    <property type="gene ID" value="ENSG00000102103.18"/>
</dbReference>
<dbReference type="Ensembl" id="ENST00000470062.5">
    <molecule id="O60828-6"/>
    <property type="protein sequence ID" value="ENSP00000509874.1"/>
    <property type="gene ID" value="ENSG00000102103.18"/>
</dbReference>
<dbReference type="Ensembl" id="ENST00000472742.6">
    <molecule id="O60828-6"/>
    <property type="protein sequence ID" value="ENSP00000509191.1"/>
    <property type="gene ID" value="ENSG00000102103.18"/>
</dbReference>
<dbReference type="Ensembl" id="ENST00000651767.1">
    <molecule id="O60828-1"/>
    <property type="protein sequence ID" value="ENSP00000498362.1"/>
    <property type="gene ID" value="ENSG00000102103.18"/>
</dbReference>
<dbReference type="Ensembl" id="ENST00000692023.1">
    <molecule id="O60828-9"/>
    <property type="protein sequence ID" value="ENSP00000509927.1"/>
    <property type="gene ID" value="ENSG00000102103.18"/>
</dbReference>
<dbReference type="Ensembl" id="ENST00000710032.1">
    <molecule id="O60828-1"/>
    <property type="protein sequence ID" value="ENSP00000518005.1"/>
    <property type="gene ID" value="ENSG00000292208.1"/>
</dbReference>
<dbReference type="Ensembl" id="ENST00000710033.1">
    <molecule id="O60828-4"/>
    <property type="protein sequence ID" value="ENSP00000518006.1"/>
    <property type="gene ID" value="ENSG00000292208.1"/>
</dbReference>
<dbReference type="Ensembl" id="ENST00000710035.1">
    <molecule id="O60828-1"/>
    <property type="protein sequence ID" value="ENSP00000518007.1"/>
    <property type="gene ID" value="ENSG00000292208.1"/>
</dbReference>
<dbReference type="Ensembl" id="ENST00000710037.1">
    <molecule id="O60828-9"/>
    <property type="protein sequence ID" value="ENSP00000518008.1"/>
    <property type="gene ID" value="ENSG00000292208.1"/>
</dbReference>
<dbReference type="Ensembl" id="ENST00000710038.1">
    <molecule id="O60828-1"/>
    <property type="protein sequence ID" value="ENSP00000518009.1"/>
    <property type="gene ID" value="ENSG00000292208.1"/>
</dbReference>
<dbReference type="Ensembl" id="ENST00000710039.1">
    <molecule id="O60828-4"/>
    <property type="protein sequence ID" value="ENSP00000518010.1"/>
    <property type="gene ID" value="ENSG00000292208.1"/>
</dbReference>
<dbReference type="Ensembl" id="ENST00000710041.1">
    <molecule id="O60828-6"/>
    <property type="protein sequence ID" value="ENSP00000518011.1"/>
    <property type="gene ID" value="ENSG00000292208.1"/>
</dbReference>
<dbReference type="Ensembl" id="ENST00000710042.1">
    <molecule id="O60828-1"/>
    <property type="protein sequence ID" value="ENSP00000518012.1"/>
    <property type="gene ID" value="ENSG00000292208.1"/>
</dbReference>
<dbReference type="Ensembl" id="ENST00000710043.1">
    <molecule id="O60828-6"/>
    <property type="protein sequence ID" value="ENSP00000518013.1"/>
    <property type="gene ID" value="ENSG00000292208.1"/>
</dbReference>
<dbReference type="Ensembl" id="ENST00000710044.1">
    <molecule id="O60828-1"/>
    <property type="protein sequence ID" value="ENSP00000518014.1"/>
    <property type="gene ID" value="ENSG00000292208.1"/>
</dbReference>
<dbReference type="Ensembl" id="ENST00000710046.1">
    <molecule id="O60828-1"/>
    <property type="protein sequence ID" value="ENSP00000518015.1"/>
    <property type="gene ID" value="ENSG00000292208.1"/>
</dbReference>
<dbReference type="Ensembl" id="ENST00000710049.1">
    <molecule id="O60828-7"/>
    <property type="protein sequence ID" value="ENSP00000518017.1"/>
    <property type="gene ID" value="ENSG00000292208.1"/>
</dbReference>
<dbReference type="GeneID" id="10084"/>
<dbReference type="KEGG" id="hsa:10084"/>
<dbReference type="MANE-Select" id="ENST00000447146.7">
    <property type="protein sequence ID" value="ENSP00000391759.2"/>
    <property type="RefSeq nucleotide sequence ID" value="NM_001032382.2"/>
    <property type="RefSeq protein sequence ID" value="NP_001027554.1"/>
</dbReference>
<dbReference type="UCSC" id="uc004dle.4">
    <molecule id="O60828-1"/>
    <property type="organism name" value="human"/>
</dbReference>
<dbReference type="UCSC" id="uc064zca.1">
    <property type="organism name" value="human"/>
</dbReference>
<dbReference type="AGR" id="HGNC:9330"/>
<dbReference type="CTD" id="10084"/>
<dbReference type="DisGeNET" id="10084"/>
<dbReference type="GeneCards" id="PQBP1"/>
<dbReference type="HGNC" id="HGNC:9330">
    <property type="gene designation" value="PQBP1"/>
</dbReference>
<dbReference type="HPA" id="ENSG00000102103">
    <property type="expression patterns" value="Low tissue specificity"/>
</dbReference>
<dbReference type="MalaCards" id="PQBP1"/>
<dbReference type="MIM" id="300463">
    <property type="type" value="gene"/>
</dbReference>
<dbReference type="MIM" id="309500">
    <property type="type" value="phenotype"/>
</dbReference>
<dbReference type="neXtProt" id="NX_O60828"/>
<dbReference type="OpenTargets" id="ENSG00000102103"/>
<dbReference type="Orphanet" id="93946">
    <property type="disease" value="Hamel cerebro-palato-cardiac syndrome"/>
</dbReference>
<dbReference type="Orphanet" id="93947">
    <property type="disease" value="X-linked intellectual disability, Golabi-Ito-Hall type"/>
</dbReference>
<dbReference type="Orphanet" id="93945">
    <property type="disease" value="X-linked intellectual disability, Porteous type"/>
</dbReference>
<dbReference type="Orphanet" id="93950">
    <property type="disease" value="X-linked intellectual disability, Sutherland-Haan type"/>
</dbReference>
<dbReference type="PharmGKB" id="PA33693"/>
<dbReference type="VEuPathDB" id="HostDB:ENSG00000102103"/>
<dbReference type="eggNOG" id="KOG3427">
    <property type="taxonomic scope" value="Eukaryota"/>
</dbReference>
<dbReference type="GeneTree" id="ENSGT00950000183102"/>
<dbReference type="HOGENOM" id="CLU_043596_1_0_1"/>
<dbReference type="InParanoid" id="O60828"/>
<dbReference type="OMA" id="IYHECSK"/>
<dbReference type="OrthoDB" id="42462at2759"/>
<dbReference type="PAN-GO" id="O60828">
    <property type="GO annotations" value="4 GO annotations based on evolutionary models"/>
</dbReference>
<dbReference type="PhylomeDB" id="O60828"/>
<dbReference type="TreeFam" id="TF320689"/>
<dbReference type="PathwayCommons" id="O60828"/>
<dbReference type="Reactome" id="R-HSA-72163">
    <property type="pathway name" value="mRNA Splicing - Major Pathway"/>
</dbReference>
<dbReference type="SignaLink" id="O60828"/>
<dbReference type="BioGRID-ORCS" id="10084">
    <property type="hits" value="81 hits in 792 CRISPR screens"/>
</dbReference>
<dbReference type="CD-CODE" id="91857CE7">
    <property type="entry name" value="Nucleolus"/>
</dbReference>
<dbReference type="CD-CODE" id="DEE660B4">
    <property type="entry name" value="Stress granule"/>
</dbReference>
<dbReference type="ChiTaRS" id="PQBP1">
    <property type="organism name" value="human"/>
</dbReference>
<dbReference type="EvolutionaryTrace" id="O60828"/>
<dbReference type="GeneWiki" id="PQBP1"/>
<dbReference type="GenomeRNAi" id="10084"/>
<dbReference type="Pharos" id="O60828">
    <property type="development level" value="Tbio"/>
</dbReference>
<dbReference type="PRO" id="PR:O60828"/>
<dbReference type="Proteomes" id="UP000005640">
    <property type="component" value="Chromosome X"/>
</dbReference>
<dbReference type="RNAct" id="O60828">
    <property type="molecule type" value="protein"/>
</dbReference>
<dbReference type="Bgee" id="ENSG00000102103">
    <property type="expression patterns" value="Expressed in left ovary and 209 other cell types or tissues"/>
</dbReference>
<dbReference type="ExpressionAtlas" id="O60828">
    <property type="expression patterns" value="baseline and differential"/>
</dbReference>
<dbReference type="GO" id="GO:0036064">
    <property type="term" value="C:ciliary basal body"/>
    <property type="evidence" value="ECO:0000314"/>
    <property type="project" value="HPA"/>
</dbReference>
<dbReference type="GO" id="GO:0005929">
    <property type="term" value="C:cilium"/>
    <property type="evidence" value="ECO:0000314"/>
    <property type="project" value="HPA"/>
</dbReference>
<dbReference type="GO" id="GO:0005737">
    <property type="term" value="C:cytoplasm"/>
    <property type="evidence" value="ECO:0000318"/>
    <property type="project" value="GO_Central"/>
</dbReference>
<dbReference type="GO" id="GO:0010494">
    <property type="term" value="C:cytoplasmic stress granule"/>
    <property type="evidence" value="ECO:0007669"/>
    <property type="project" value="Ensembl"/>
</dbReference>
<dbReference type="GO" id="GO:0005829">
    <property type="term" value="C:cytosol"/>
    <property type="evidence" value="ECO:0000314"/>
    <property type="project" value="HPA"/>
</dbReference>
<dbReference type="GO" id="GO:0015630">
    <property type="term" value="C:microtubule cytoskeleton"/>
    <property type="evidence" value="ECO:0000314"/>
    <property type="project" value="HPA"/>
</dbReference>
<dbReference type="GO" id="GO:0071598">
    <property type="term" value="C:neuronal ribonucleoprotein granule"/>
    <property type="evidence" value="ECO:0007669"/>
    <property type="project" value="Ensembl"/>
</dbReference>
<dbReference type="GO" id="GO:0016604">
    <property type="term" value="C:nuclear body"/>
    <property type="evidence" value="ECO:0000318"/>
    <property type="project" value="GO_Central"/>
</dbReference>
<dbReference type="GO" id="GO:0016607">
    <property type="term" value="C:nuclear speck"/>
    <property type="evidence" value="ECO:0000314"/>
    <property type="project" value="HPA"/>
</dbReference>
<dbReference type="GO" id="GO:0005654">
    <property type="term" value="C:nucleoplasm"/>
    <property type="evidence" value="ECO:0000314"/>
    <property type="project" value="HPA"/>
</dbReference>
<dbReference type="GO" id="GO:0005634">
    <property type="term" value="C:nucleus"/>
    <property type="evidence" value="ECO:0000304"/>
    <property type="project" value="ProtInc"/>
</dbReference>
<dbReference type="GO" id="GO:0003677">
    <property type="term" value="F:DNA binding"/>
    <property type="evidence" value="ECO:0000304"/>
    <property type="project" value="ProtInc"/>
</dbReference>
<dbReference type="GO" id="GO:0003690">
    <property type="term" value="F:double-stranded DNA binding"/>
    <property type="evidence" value="ECO:0000314"/>
    <property type="project" value="UniProtKB"/>
</dbReference>
<dbReference type="GO" id="GO:0043021">
    <property type="term" value="F:ribonucleoprotein complex binding"/>
    <property type="evidence" value="ECO:0000314"/>
    <property type="project" value="MGI"/>
</dbReference>
<dbReference type="GO" id="GO:0003713">
    <property type="term" value="F:transcription coactivator activity"/>
    <property type="evidence" value="ECO:0000304"/>
    <property type="project" value="ProtInc"/>
</dbReference>
<dbReference type="GO" id="GO:0002218">
    <property type="term" value="P:activation of innate immune response"/>
    <property type="evidence" value="ECO:0000314"/>
    <property type="project" value="UniProtKB"/>
</dbReference>
<dbReference type="GO" id="GO:0000380">
    <property type="term" value="P:alternative mRNA splicing, via spliceosome"/>
    <property type="evidence" value="ECO:0000315"/>
    <property type="project" value="UniProtKB"/>
</dbReference>
<dbReference type="GO" id="GO:0071360">
    <property type="term" value="P:cellular response to exogenous dsRNA"/>
    <property type="evidence" value="ECO:0000314"/>
    <property type="project" value="UniProtKB"/>
</dbReference>
<dbReference type="GO" id="GO:0051607">
    <property type="term" value="P:defense response to virus"/>
    <property type="evidence" value="ECO:0000314"/>
    <property type="project" value="UniProtKB"/>
</dbReference>
<dbReference type="GO" id="GO:0045087">
    <property type="term" value="P:innate immune response"/>
    <property type="evidence" value="ECO:0007669"/>
    <property type="project" value="UniProtKB-KW"/>
</dbReference>
<dbReference type="GO" id="GO:0031175">
    <property type="term" value="P:neuron projection development"/>
    <property type="evidence" value="ECO:0000250"/>
    <property type="project" value="UniProtKB"/>
</dbReference>
<dbReference type="GO" id="GO:0002230">
    <property type="term" value="P:positive regulation of defense response to virus by host"/>
    <property type="evidence" value="ECO:0000314"/>
    <property type="project" value="UniProtKB"/>
</dbReference>
<dbReference type="GO" id="GO:0032481">
    <property type="term" value="P:positive regulation of type I interferon production"/>
    <property type="evidence" value="ECO:0000314"/>
    <property type="project" value="UniProtKB"/>
</dbReference>
<dbReference type="GO" id="GO:0048814">
    <property type="term" value="P:regulation of dendrite morphogenesis"/>
    <property type="evidence" value="ECO:0007669"/>
    <property type="project" value="Ensembl"/>
</dbReference>
<dbReference type="GO" id="GO:0006355">
    <property type="term" value="P:regulation of DNA-templated transcription"/>
    <property type="evidence" value="ECO:0000304"/>
    <property type="project" value="ProtInc"/>
</dbReference>
<dbReference type="GO" id="GO:0043484">
    <property type="term" value="P:regulation of RNA splicing"/>
    <property type="evidence" value="ECO:0000315"/>
    <property type="project" value="MGI"/>
</dbReference>
<dbReference type="DisProt" id="DP01308"/>
<dbReference type="FunFam" id="3.40.30.10:FF:000140">
    <property type="entry name" value="polyglutamine-binding protein 1 isoform X1"/>
    <property type="match status" value="1"/>
</dbReference>
<dbReference type="Gene3D" id="2.20.70.10">
    <property type="match status" value="1"/>
</dbReference>
<dbReference type="Gene3D" id="3.40.30.10">
    <property type="entry name" value="Glutaredoxin"/>
    <property type="match status" value="1"/>
</dbReference>
<dbReference type="IDEAL" id="IID00187"/>
<dbReference type="InterPro" id="IPR001202">
    <property type="entry name" value="WW_dom"/>
</dbReference>
<dbReference type="InterPro" id="IPR036020">
    <property type="entry name" value="WW_dom_sf"/>
</dbReference>
<dbReference type="PANTHER" id="PTHR21737">
    <property type="entry name" value="POLYGLUTAMINE BINDING PROTEIN 1/MARVEL MEMBRANE-ASSOCIATING DOMAIN CONTAINING 3"/>
    <property type="match status" value="1"/>
</dbReference>
<dbReference type="PANTHER" id="PTHR21737:SF3">
    <property type="entry name" value="POLYGLUTAMINE-BINDING PROTEIN 1"/>
    <property type="match status" value="1"/>
</dbReference>
<dbReference type="SMART" id="SM00456">
    <property type="entry name" value="WW"/>
    <property type="match status" value="1"/>
</dbReference>
<dbReference type="SUPFAM" id="SSF51045">
    <property type="entry name" value="WW domain"/>
    <property type="match status" value="1"/>
</dbReference>
<dbReference type="PROSITE" id="PS50020">
    <property type="entry name" value="WW_DOMAIN_2"/>
    <property type="match status" value="1"/>
</dbReference>
<keyword id="KW-0002">3D-structure</keyword>
<keyword id="KW-0025">Alternative splicing</keyword>
<keyword id="KW-0903">Direct protein sequencing</keyword>
<keyword id="KW-0391">Immunity</keyword>
<keyword id="KW-0399">Innate immunity</keyword>
<keyword id="KW-0991">Intellectual disability</keyword>
<keyword id="KW-0507">mRNA processing</keyword>
<keyword id="KW-0508">mRNA splicing</keyword>
<keyword id="KW-0539">Nucleus</keyword>
<keyword id="KW-0597">Phosphoprotein</keyword>
<keyword id="KW-1267">Proteomics identification</keyword>
<keyword id="KW-1185">Reference proteome</keyword>
<keyword id="KW-0677">Repeat</keyword>
<keyword id="KW-0804">Transcription</keyword>
<keyword id="KW-0805">Transcription regulation</keyword>
<organism>
    <name type="scientific">Homo sapiens</name>
    <name type="common">Human</name>
    <dbReference type="NCBI Taxonomy" id="9606"/>
    <lineage>
        <taxon>Eukaryota</taxon>
        <taxon>Metazoa</taxon>
        <taxon>Chordata</taxon>
        <taxon>Craniata</taxon>
        <taxon>Vertebrata</taxon>
        <taxon>Euteleostomi</taxon>
        <taxon>Mammalia</taxon>
        <taxon>Eutheria</taxon>
        <taxon>Euarchontoglires</taxon>
        <taxon>Primates</taxon>
        <taxon>Haplorrhini</taxon>
        <taxon>Catarrhini</taxon>
        <taxon>Hominidae</taxon>
        <taxon>Homo</taxon>
    </lineage>
</organism>
<feature type="initiator methionine" description="Removed" evidence="21">
    <location>
        <position position="1"/>
    </location>
</feature>
<feature type="chain" id="PRO_0000076089" description="Polyglutamine-binding protein 1">
    <location>
        <begin position="2"/>
        <end position="265"/>
    </location>
</feature>
<feature type="domain" description="WW" evidence="2">
    <location>
        <begin position="46"/>
        <end position="80"/>
    </location>
</feature>
<feature type="repeat" description="1-1">
    <location>
        <begin position="104"/>
        <end position="110"/>
    </location>
</feature>
<feature type="repeat" description="1-2">
    <location>
        <begin position="111"/>
        <end position="117"/>
    </location>
</feature>
<feature type="repeat" description="1-3">
    <location>
        <begin position="118"/>
        <end position="124"/>
    </location>
</feature>
<feature type="repeat" description="1-4">
    <location>
        <begin position="125"/>
        <end position="131"/>
    </location>
</feature>
<feature type="repeat" description="1-5">
    <location>
        <begin position="132"/>
        <end position="138"/>
    </location>
</feature>
<feature type="repeat" description="2-1">
    <location>
        <begin position="139"/>
        <end position="140"/>
    </location>
</feature>
<feature type="repeat" description="2-2">
    <location>
        <begin position="141"/>
        <end position="142"/>
    </location>
</feature>
<feature type="repeat" description="2-3">
    <location>
        <begin position="143"/>
        <end position="144"/>
    </location>
</feature>
<feature type="repeat" description="3-1">
    <location>
        <begin position="150"/>
        <end position="151"/>
    </location>
</feature>
<feature type="repeat" description="3-2">
    <location>
        <begin position="152"/>
        <end position="153"/>
    </location>
</feature>
<feature type="repeat" description="3-3">
    <location>
        <begin position="154"/>
        <end position="155"/>
    </location>
</feature>
<feature type="repeat" description="3-4">
    <location>
        <begin position="156"/>
        <end position="157"/>
    </location>
</feature>
<feature type="repeat" description="3-5">
    <location>
        <begin position="158"/>
        <end position="159"/>
    </location>
</feature>
<feature type="repeat" description="3-6">
    <location>
        <begin position="160"/>
        <end position="161"/>
    </location>
</feature>
<feature type="repeat" description="3-7">
    <location>
        <begin position="162"/>
        <end position="163"/>
    </location>
</feature>
<feature type="region of interest" description="Disordered" evidence="11">
    <location>
        <begin position="94"/>
        <end position="265"/>
    </location>
</feature>
<feature type="region of interest" description="5 X 7 AA approximate tandem repeats of D-R-[SG]-H-D-K-S">
    <location>
        <begin position="104"/>
        <end position="138"/>
    </location>
</feature>
<feature type="region of interest" description="3 X 2 AA tandem repeats of [DE]-R">
    <location>
        <begin position="139"/>
        <end position="144"/>
    </location>
</feature>
<feature type="region of interest" description="7 X 2 AA tandem repeats of [DE]-R">
    <location>
        <begin position="150"/>
        <end position="163"/>
    </location>
</feature>
<feature type="region of interest" description="Important for interaction with TXNL4A">
    <location>
        <begin position="245"/>
        <end position="255"/>
    </location>
</feature>
<feature type="compositionally biased region" description="Basic and acidic residues" evidence="3">
    <location>
        <begin position="99"/>
        <end position="175"/>
    </location>
</feature>
<feature type="modified residue" description="Phosphoserine" evidence="29">
    <location>
        <position position="94"/>
    </location>
</feature>
<feature type="modified residue" description="Phosphoserine" evidence="28">
    <location>
        <position position="247"/>
    </location>
</feature>
<feature type="splice variant" id="VSP_015896" description="In isoform 8." evidence="25">
    <original>VFDPSCGLPYYWNADTDLV</original>
    <variation>RAPLLLECRHRPCILALPT</variation>
    <location>
        <begin position="55"/>
        <end position="73"/>
    </location>
</feature>
<feature type="splice variant" id="VSP_015897" description="In isoform 10." evidence="25">
    <original>C</original>
    <variation>W</variation>
    <location>
        <position position="60"/>
    </location>
</feature>
<feature type="splice variant" id="VSP_015898" description="In isoform 10." evidence="25">
    <location>
        <begin position="61"/>
        <end position="265"/>
    </location>
</feature>
<feature type="splice variant" id="VSP_015899" description="In isoform 9." evidence="25">
    <original>GLPYYWN</original>
    <variation>PGWSAMV</variation>
    <location>
        <begin position="61"/>
        <end position="67"/>
    </location>
</feature>
<feature type="splice variant" id="VSP_015901" description="In isoform 9." evidence="25">
    <location>
        <begin position="68"/>
        <end position="265"/>
    </location>
</feature>
<feature type="splice variant" id="VSP_015900" description="In isoform 5." evidence="25">
    <location>
        <begin position="68"/>
        <end position="167"/>
    </location>
</feature>
<feature type="splice variant" id="VSP_015902" description="In isoform 8." evidence="25">
    <location>
        <begin position="74"/>
        <end position="265"/>
    </location>
</feature>
<feature type="splice variant" id="VSP_015903" description="In isoform 4." evidence="24 25">
    <location>
        <begin position="98"/>
        <end position="192"/>
    </location>
</feature>
<feature type="splice variant" id="VSP_015904" description="In isoform 7." evidence="24">
    <original>AEEKLDRSHDKSDRGHDKSDRSHEKLDRGH</original>
    <variation>LCPQMLKKSWTGAMTSRTGAMTSRTAAMRN</variation>
    <location>
        <begin position="99"/>
        <end position="128"/>
    </location>
</feature>
<feature type="splice variant" id="VSP_015905" description="In isoform 7." evidence="24">
    <location>
        <begin position="129"/>
        <end position="265"/>
    </location>
</feature>
<feature type="splice variant" id="VSP_015906" description="In isoform 6." evidence="25">
    <original>V</original>
    <variation>Q</variation>
    <location>
        <position position="149"/>
    </location>
</feature>
<feature type="splice variant" id="VSP_015907" description="In isoform 6." evidence="25">
    <location>
        <begin position="150"/>
        <end position="265"/>
    </location>
</feature>
<feature type="splice variant" id="VSP_015908" description="In isoform 3." evidence="24 25">
    <original>AVSRKDEELDPMDPSSYSDAPRGTWSTGLPKR</original>
    <variation>GKLGRMGLGETNKVQGALREEAFPQKDAWTWG</variation>
    <location>
        <begin position="193"/>
        <end position="224"/>
    </location>
</feature>
<feature type="splice variant" id="VSP_015909" description="In isoform 2." evidence="25">
    <location>
        <position position="193"/>
    </location>
</feature>
<feature type="splice variant" id="VSP_015910" description="In isoform 3." evidence="24 25">
    <location>
        <begin position="225"/>
        <end position="265"/>
    </location>
</feature>
<feature type="sequence variant" id="VAR_071063" description="In RENS1; impairs interaction with WBP11, CGAS, SF3B1 and ATN1; dbSNP:rs121917899." evidence="9 12 15 17">
    <original>Y</original>
    <variation>C</variation>
    <location>
        <position position="65"/>
    </location>
</feature>
<feature type="sequence variant" id="VAR_036357" description="In a colorectal cancer sample; somatic mutation." evidence="10">
    <original>R</original>
    <variation>W</variation>
    <location>
        <position position="224"/>
    </location>
</feature>
<feature type="sequence variant" id="VAR_078695" description="Found in a patient with autism; uncertain significance; dbSNP:rs878853145." evidence="18">
    <original>P</original>
    <variation>L</variation>
    <location>
        <position position="244"/>
    </location>
</feature>
<feature type="mutagenesis site" description="Enhances transcriptional activation. Reduces transcriptional activation; when associated with A-75. Markedly reduced transcriptional activation; when associated with A-64; A-65 and A-66. Abolishes transcriptional activation; when associated with A-64; A-65; A-66 and A-75." evidence="4">
    <original>W</original>
    <variation>A</variation>
    <location>
        <position position="52"/>
    </location>
</feature>
<feature type="mutagenesis site" description="No effect on transcriptional activation; when associated with A-65 and A-66. Markedly reduced transcriptional activation; when associated with A-52; A-65 and A-66. Abolishes transcriptional activation; when associated with A-52; A-65; A-66 and A-75." evidence="4">
    <original>Y</original>
    <variation>A</variation>
    <location>
        <position position="64"/>
    </location>
</feature>
<feature type="mutagenesis site" description="No effect on transcriptional activation; when associated with A-64 and A-66. Markedly reduced transcriptional activation; when associated with A-52; A-64 and A-66. Abolishes transcriptional activation; when associated with A-52; A-64; A-66 and A-75." evidence="4">
    <original>Y</original>
    <variation>A</variation>
    <location>
        <position position="65"/>
    </location>
</feature>
<feature type="mutagenesis site" description="No effect on transcriptional activation; when associated with A-64 and A-65. Markedly reduced transcriptional activation; when associated with A-52; A-64 and A-65. Abolishes transcriptional activation; when associated with A-52; A-64; A-65 and A-75." evidence="4">
    <original>W</original>
    <variation>A</variation>
    <location>
        <position position="66"/>
    </location>
</feature>
<feature type="mutagenesis site" description="No effect on transcriptional activation. Reduces transcriptional activation; when associated with A-52. Abolishes transcriptional activation; when associated with A-52; A-64; A-65 and A-66." evidence="4">
    <original>W</original>
    <variation>A</variation>
    <location>
        <position position="75"/>
    </location>
</feature>
<feature type="mutagenesis site" description="No effect on transcriptional activation." evidence="4">
    <original>P</original>
    <variation>G</variation>
    <location>
        <position position="78"/>
    </location>
</feature>
<feature type="mutagenesis site" description="Abolishes interaction with TXNL4A." evidence="16">
    <original>Y</original>
    <variation>D</variation>
    <location>
        <position position="245"/>
    </location>
</feature>
<feature type="mutagenesis site" description="Abolishes interaction with TXNL4A." evidence="16">
    <original>P</original>
    <variation>D</variation>
    <location>
        <position position="248"/>
    </location>
</feature>
<feature type="mutagenesis site" description="Abolishes interaction with TXNL4A." evidence="16">
    <original>V</original>
    <variation>D</variation>
    <location>
        <position position="251"/>
    </location>
</feature>
<feature type="mutagenesis site" description="Abolishes interaction with TXNL4A." evidence="16">
    <original>L</original>
    <variation>D</variation>
    <location>
        <position position="252"/>
    </location>
</feature>
<feature type="mutagenesis site" description="Strongly reduces affinity for TXNL4A." evidence="16">
    <original>R</original>
    <variation>D</variation>
    <location>
        <position position="253"/>
    </location>
</feature>
<feature type="mutagenesis site" description="Strongly reduces affinity for TXNL4A." evidence="16">
    <original>N</original>
    <variation>D</variation>
    <location>
        <position position="255"/>
    </location>
</feature>
<feature type="sequence conflict" description="In Ref. 4; CAJ00539." evidence="26" ref="4">
    <original>Q</original>
    <variation>L</variation>
    <location>
        <position position="8"/>
    </location>
</feature>
<feature type="sequence conflict" description="In Ref. 4; CAJ00548." evidence="26" ref="4">
    <original>D</original>
    <variation>N</variation>
    <location>
        <position position="57"/>
    </location>
</feature>
<feature type="sequence conflict" description="In Ref. 4; CAJ00538/CAJ00539/CAJ00540/CAJ00541." evidence="26" ref="4">
    <location>
        <begin position="107"/>
        <end position="113"/>
    </location>
</feature>
<feature type="sequence conflict" description="In Ref. 4; CAJ00549." evidence="26" ref="4">
    <original>H</original>
    <variation>Q</variation>
    <location>
        <position position="107"/>
    </location>
</feature>
<feature type="sequence conflict" description="In Ref. 4; CAJ00549." evidence="26" ref="4">
    <original>D</original>
    <variation>G</variation>
    <location>
        <position position="147"/>
    </location>
</feature>
<feature type="sequence conflict" description="In Ref. 4; CAJ00549." evidence="26" ref="4">
    <original>D</original>
    <variation>G</variation>
    <location>
        <position position="198"/>
    </location>
</feature>
<feature type="sequence conflict" description="In Ref. 4; CAJ00548." evidence="26" ref="4">
    <original>A</original>
    <variation>V</variation>
    <location>
        <position position="236"/>
    </location>
</feature>
<feature type="helix" evidence="30">
    <location>
        <begin position="248"/>
        <end position="258"/>
    </location>
</feature>
<protein>
    <recommendedName>
        <fullName evidence="23 24">Polyglutamine-binding protein 1</fullName>
        <shortName evidence="23 24">PQBP-1</shortName>
    </recommendedName>
    <alternativeName>
        <fullName evidence="22">38 kDa nuclear protein containing a WW domain</fullName>
        <shortName evidence="22">Npw38</shortName>
    </alternativeName>
    <alternativeName>
        <fullName evidence="23">Polyglutamine tract-binding protein 1</fullName>
    </alternativeName>
</protein>
<name>PQBP1_HUMAN</name>
<gene>
    <name evidence="23 24 27" type="primary">PQBP1</name>
    <name evidence="22" type="synonym">NPW38</name>
    <name type="ORF">JM26</name>
</gene>